<accession>Q2IY20</accession>
<sequence>MDAKIKPLRAGKSADARTDFQPAELDPSEFLAAAVQPDQPRPSRAEAEAAVKTLLSYIGENTEREGLLDTPRRVVEAYDELFQGYHQCPAEVLDRTFGETAGYDDFVLVRDISFTSHCEHHVMPFYGKAHIAYTPVERVVGLSKLARLVEIFARRLQTQEHLTAQIAAAIDEVLKPRGVAVMIEAEHTCMSVRGIGKQGASTFTSRYTGMFRDNPAEQARFMSMIRNRG</sequence>
<gene>
    <name evidence="2" type="primary">folE</name>
    <name type="ordered locus">RPB_2184</name>
</gene>
<organism>
    <name type="scientific">Rhodopseudomonas palustris (strain HaA2)</name>
    <dbReference type="NCBI Taxonomy" id="316058"/>
    <lineage>
        <taxon>Bacteria</taxon>
        <taxon>Pseudomonadati</taxon>
        <taxon>Pseudomonadota</taxon>
        <taxon>Alphaproteobacteria</taxon>
        <taxon>Hyphomicrobiales</taxon>
        <taxon>Nitrobacteraceae</taxon>
        <taxon>Rhodopseudomonas</taxon>
    </lineage>
</organism>
<keyword id="KW-0342">GTP-binding</keyword>
<keyword id="KW-0378">Hydrolase</keyword>
<keyword id="KW-0479">Metal-binding</keyword>
<keyword id="KW-0547">Nucleotide-binding</keyword>
<keyword id="KW-0554">One-carbon metabolism</keyword>
<keyword id="KW-1185">Reference proteome</keyword>
<keyword id="KW-0862">Zinc</keyword>
<proteinExistence type="inferred from homology"/>
<name>GCH1_RHOP2</name>
<evidence type="ECO:0000250" key="1"/>
<evidence type="ECO:0000255" key="2">
    <source>
        <dbReference type="HAMAP-Rule" id="MF_00223"/>
    </source>
</evidence>
<evidence type="ECO:0000256" key="3">
    <source>
        <dbReference type="SAM" id="MobiDB-lite"/>
    </source>
</evidence>
<reference key="1">
    <citation type="submission" date="2006-01" db="EMBL/GenBank/DDBJ databases">
        <title>Complete sequence of Rhodopseudomonas palustris HaA2.</title>
        <authorList>
            <consortium name="US DOE Joint Genome Institute"/>
            <person name="Copeland A."/>
            <person name="Lucas S."/>
            <person name="Lapidus A."/>
            <person name="Barry K."/>
            <person name="Detter J.C."/>
            <person name="Glavina T."/>
            <person name="Hammon N."/>
            <person name="Israni S."/>
            <person name="Pitluck S."/>
            <person name="Chain P."/>
            <person name="Malfatti S."/>
            <person name="Shin M."/>
            <person name="Vergez L."/>
            <person name="Schmutz J."/>
            <person name="Larimer F."/>
            <person name="Land M."/>
            <person name="Hauser L."/>
            <person name="Pelletier D.A."/>
            <person name="Kyrpides N."/>
            <person name="Anderson I."/>
            <person name="Oda Y."/>
            <person name="Harwood C.S."/>
            <person name="Richardson P."/>
        </authorList>
    </citation>
    <scope>NUCLEOTIDE SEQUENCE [LARGE SCALE GENOMIC DNA]</scope>
    <source>
        <strain>HaA2</strain>
    </source>
</reference>
<protein>
    <recommendedName>
        <fullName evidence="2">GTP cyclohydrolase 1</fullName>
        <ecNumber evidence="2">3.5.4.16</ecNumber>
    </recommendedName>
    <alternativeName>
        <fullName evidence="2">GTP cyclohydrolase I</fullName>
        <shortName evidence="2">GTP-CH-I</shortName>
    </alternativeName>
</protein>
<dbReference type="EC" id="3.5.4.16" evidence="2"/>
<dbReference type="EMBL" id="CP000250">
    <property type="protein sequence ID" value="ABD06890.1"/>
    <property type="molecule type" value="Genomic_DNA"/>
</dbReference>
<dbReference type="RefSeq" id="WP_011441077.1">
    <property type="nucleotide sequence ID" value="NC_007778.1"/>
</dbReference>
<dbReference type="SMR" id="Q2IY20"/>
<dbReference type="STRING" id="316058.RPB_2184"/>
<dbReference type="KEGG" id="rpb:RPB_2184"/>
<dbReference type="eggNOG" id="COG0302">
    <property type="taxonomic scope" value="Bacteria"/>
</dbReference>
<dbReference type="HOGENOM" id="CLU_049768_3_1_5"/>
<dbReference type="OrthoDB" id="9801207at2"/>
<dbReference type="UniPathway" id="UPA00848">
    <property type="reaction ID" value="UER00151"/>
</dbReference>
<dbReference type="Proteomes" id="UP000008809">
    <property type="component" value="Chromosome"/>
</dbReference>
<dbReference type="GO" id="GO:0005737">
    <property type="term" value="C:cytoplasm"/>
    <property type="evidence" value="ECO:0007669"/>
    <property type="project" value="TreeGrafter"/>
</dbReference>
<dbReference type="GO" id="GO:0005525">
    <property type="term" value="F:GTP binding"/>
    <property type="evidence" value="ECO:0007669"/>
    <property type="project" value="UniProtKB-KW"/>
</dbReference>
<dbReference type="GO" id="GO:0003934">
    <property type="term" value="F:GTP cyclohydrolase I activity"/>
    <property type="evidence" value="ECO:0007669"/>
    <property type="project" value="UniProtKB-UniRule"/>
</dbReference>
<dbReference type="GO" id="GO:0008270">
    <property type="term" value="F:zinc ion binding"/>
    <property type="evidence" value="ECO:0007669"/>
    <property type="project" value="UniProtKB-UniRule"/>
</dbReference>
<dbReference type="GO" id="GO:0006730">
    <property type="term" value="P:one-carbon metabolic process"/>
    <property type="evidence" value="ECO:0007669"/>
    <property type="project" value="UniProtKB-UniRule"/>
</dbReference>
<dbReference type="GO" id="GO:0006729">
    <property type="term" value="P:tetrahydrobiopterin biosynthetic process"/>
    <property type="evidence" value="ECO:0007669"/>
    <property type="project" value="TreeGrafter"/>
</dbReference>
<dbReference type="GO" id="GO:0046654">
    <property type="term" value="P:tetrahydrofolate biosynthetic process"/>
    <property type="evidence" value="ECO:0007669"/>
    <property type="project" value="UniProtKB-UniRule"/>
</dbReference>
<dbReference type="FunFam" id="1.10.286.10:FF:000001">
    <property type="entry name" value="GTP cyclohydrolase 1"/>
    <property type="match status" value="1"/>
</dbReference>
<dbReference type="FunFam" id="3.30.1130.10:FF:000001">
    <property type="entry name" value="GTP cyclohydrolase 1"/>
    <property type="match status" value="1"/>
</dbReference>
<dbReference type="Gene3D" id="1.10.286.10">
    <property type="match status" value="1"/>
</dbReference>
<dbReference type="Gene3D" id="3.30.1130.10">
    <property type="match status" value="1"/>
</dbReference>
<dbReference type="HAMAP" id="MF_00223">
    <property type="entry name" value="FolE"/>
    <property type="match status" value="1"/>
</dbReference>
<dbReference type="InterPro" id="IPR043133">
    <property type="entry name" value="GTP-CH-I_C/QueF"/>
</dbReference>
<dbReference type="InterPro" id="IPR043134">
    <property type="entry name" value="GTP-CH-I_N"/>
</dbReference>
<dbReference type="InterPro" id="IPR001474">
    <property type="entry name" value="GTP_CycHdrlase_I"/>
</dbReference>
<dbReference type="InterPro" id="IPR018234">
    <property type="entry name" value="GTP_CycHdrlase_I_CS"/>
</dbReference>
<dbReference type="InterPro" id="IPR020602">
    <property type="entry name" value="GTP_CycHdrlase_I_dom"/>
</dbReference>
<dbReference type="NCBIfam" id="TIGR00063">
    <property type="entry name" value="folE"/>
    <property type="match status" value="1"/>
</dbReference>
<dbReference type="NCBIfam" id="NF006825">
    <property type="entry name" value="PRK09347.1-2"/>
    <property type="match status" value="1"/>
</dbReference>
<dbReference type="NCBIfam" id="NF006826">
    <property type="entry name" value="PRK09347.1-3"/>
    <property type="match status" value="1"/>
</dbReference>
<dbReference type="PANTHER" id="PTHR11109:SF7">
    <property type="entry name" value="GTP CYCLOHYDROLASE 1"/>
    <property type="match status" value="1"/>
</dbReference>
<dbReference type="PANTHER" id="PTHR11109">
    <property type="entry name" value="GTP CYCLOHYDROLASE I"/>
    <property type="match status" value="1"/>
</dbReference>
<dbReference type="Pfam" id="PF01227">
    <property type="entry name" value="GTP_cyclohydroI"/>
    <property type="match status" value="1"/>
</dbReference>
<dbReference type="SUPFAM" id="SSF55620">
    <property type="entry name" value="Tetrahydrobiopterin biosynthesis enzymes-like"/>
    <property type="match status" value="1"/>
</dbReference>
<dbReference type="PROSITE" id="PS00859">
    <property type="entry name" value="GTP_CYCLOHYDROL_1_1"/>
    <property type="match status" value="1"/>
</dbReference>
<feature type="chain" id="PRO_1000043719" description="GTP cyclohydrolase 1">
    <location>
        <begin position="1"/>
        <end position="229"/>
    </location>
</feature>
<feature type="region of interest" description="Disordered" evidence="3">
    <location>
        <begin position="1"/>
        <end position="21"/>
    </location>
</feature>
<feature type="binding site" evidence="2">
    <location>
        <position position="118"/>
    </location>
    <ligand>
        <name>Zn(2+)</name>
        <dbReference type="ChEBI" id="CHEBI:29105"/>
    </ligand>
</feature>
<feature type="binding site" evidence="2">
    <location>
        <position position="121"/>
    </location>
    <ligand>
        <name>Zn(2+)</name>
        <dbReference type="ChEBI" id="CHEBI:29105"/>
    </ligand>
</feature>
<feature type="binding site" evidence="2">
    <location>
        <position position="189"/>
    </location>
    <ligand>
        <name>Zn(2+)</name>
        <dbReference type="ChEBI" id="CHEBI:29105"/>
    </ligand>
</feature>
<comment type="catalytic activity">
    <reaction evidence="2">
        <text>GTP + H2O = 7,8-dihydroneopterin 3'-triphosphate + formate + H(+)</text>
        <dbReference type="Rhea" id="RHEA:17473"/>
        <dbReference type="ChEBI" id="CHEBI:15377"/>
        <dbReference type="ChEBI" id="CHEBI:15378"/>
        <dbReference type="ChEBI" id="CHEBI:15740"/>
        <dbReference type="ChEBI" id="CHEBI:37565"/>
        <dbReference type="ChEBI" id="CHEBI:58462"/>
        <dbReference type="EC" id="3.5.4.16"/>
    </reaction>
</comment>
<comment type="pathway">
    <text evidence="2">Cofactor biosynthesis; 7,8-dihydroneopterin triphosphate biosynthesis; 7,8-dihydroneopterin triphosphate from GTP: step 1/1.</text>
</comment>
<comment type="subunit">
    <text evidence="1">Toroid-shaped homodecamer, composed of two pentamers of five dimers.</text>
</comment>
<comment type="similarity">
    <text evidence="2">Belongs to the GTP cyclohydrolase I family.</text>
</comment>